<name>SR34A_ARATH</name>
<organism>
    <name type="scientific">Arabidopsis thaliana</name>
    <name type="common">Mouse-ear cress</name>
    <dbReference type="NCBI Taxonomy" id="3702"/>
    <lineage>
        <taxon>Eukaryota</taxon>
        <taxon>Viridiplantae</taxon>
        <taxon>Streptophyta</taxon>
        <taxon>Embryophyta</taxon>
        <taxon>Tracheophyta</taxon>
        <taxon>Spermatophyta</taxon>
        <taxon>Magnoliopsida</taxon>
        <taxon>eudicotyledons</taxon>
        <taxon>Gunneridae</taxon>
        <taxon>Pentapetalae</taxon>
        <taxon>rosids</taxon>
        <taxon>malvids</taxon>
        <taxon>Brassicales</taxon>
        <taxon>Brassicaceae</taxon>
        <taxon>Camelineae</taxon>
        <taxon>Arabidopsis</taxon>
    </lineage>
</organism>
<dbReference type="EMBL" id="AC012329">
    <property type="protein sequence ID" value="AAG52185.1"/>
    <property type="status" value="ALT_SEQ"/>
    <property type="molecule type" value="Genomic_DNA"/>
</dbReference>
<dbReference type="EMBL" id="AL132964">
    <property type="protein sequence ID" value="CAB62448.1"/>
    <property type="status" value="ALT_SEQ"/>
    <property type="molecule type" value="Genomic_DNA"/>
</dbReference>
<dbReference type="EMBL" id="CP002686">
    <property type="protein sequence ID" value="AEE78541.1"/>
    <property type="molecule type" value="Genomic_DNA"/>
</dbReference>
<dbReference type="EMBL" id="CP002686">
    <property type="protein sequence ID" value="AEE78542.1"/>
    <property type="molecule type" value="Genomic_DNA"/>
</dbReference>
<dbReference type="EMBL" id="CP002686">
    <property type="protein sequence ID" value="AEE78543.1"/>
    <property type="molecule type" value="Genomic_DNA"/>
</dbReference>
<dbReference type="EMBL" id="CP002686">
    <property type="protein sequence ID" value="ANM63803.1"/>
    <property type="molecule type" value="Genomic_DNA"/>
</dbReference>
<dbReference type="EMBL" id="CP002686">
    <property type="protein sequence ID" value="ANM63804.1"/>
    <property type="molecule type" value="Genomic_DNA"/>
</dbReference>
<dbReference type="EMBL" id="CP002686">
    <property type="protein sequence ID" value="ANM63805.1"/>
    <property type="molecule type" value="Genomic_DNA"/>
</dbReference>
<dbReference type="EMBL" id="CP002686">
    <property type="protein sequence ID" value="ANM63806.1"/>
    <property type="molecule type" value="Genomic_DNA"/>
</dbReference>
<dbReference type="EMBL" id="BT030067">
    <property type="protein sequence ID" value="ABN04805.1"/>
    <property type="molecule type" value="mRNA"/>
</dbReference>
<dbReference type="PIR" id="T46221">
    <property type="entry name" value="T46221"/>
</dbReference>
<dbReference type="RefSeq" id="NP_001078264.1">
    <molecule id="A2RVS6-2"/>
    <property type="nucleotide sequence ID" value="NM_001084795.1"/>
</dbReference>
<dbReference type="RefSeq" id="NP_001190041.1">
    <molecule id="A2RVS6-1"/>
    <property type="nucleotide sequence ID" value="NM_001203112.1"/>
</dbReference>
<dbReference type="RefSeq" id="NP_001325874.1">
    <molecule id="A2RVS6-1"/>
    <property type="nucleotide sequence ID" value="NM_001339418.1"/>
</dbReference>
<dbReference type="RefSeq" id="NP_001325875.1">
    <molecule id="A2RVS6-1"/>
    <property type="nucleotide sequence ID" value="NM_001339417.1"/>
</dbReference>
<dbReference type="RefSeq" id="NP_001325876.1">
    <molecule id="A2RVS6-1"/>
    <property type="nucleotide sequence ID" value="NM_001339419.1"/>
</dbReference>
<dbReference type="RefSeq" id="NP_001325877.1">
    <molecule id="A2RVS6-1"/>
    <property type="nucleotide sequence ID" value="NM_001339420.1"/>
</dbReference>
<dbReference type="RefSeq" id="NP_190512.3">
    <molecule id="A2RVS6-1"/>
    <property type="nucleotide sequence ID" value="NM_114803.6"/>
</dbReference>
<dbReference type="SMR" id="A2RVS6"/>
<dbReference type="BioGRID" id="9423">
    <property type="interactions" value="9"/>
</dbReference>
<dbReference type="FunCoup" id="A2RVS6">
    <property type="interactions" value="4254"/>
</dbReference>
<dbReference type="IntAct" id="A2RVS6">
    <property type="interactions" value="1"/>
</dbReference>
<dbReference type="STRING" id="3702.A2RVS6"/>
<dbReference type="iPTMnet" id="A2RVS6"/>
<dbReference type="MetOSite" id="A2RVS6"/>
<dbReference type="PaxDb" id="3702-AT3G49430.3"/>
<dbReference type="ProteomicsDB" id="226708">
    <molecule id="A2RVS6-1"/>
</dbReference>
<dbReference type="EnsemblPlants" id="AT3G49430.1">
    <molecule id="A2RVS6-1"/>
    <property type="protein sequence ID" value="AT3G49430.1"/>
    <property type="gene ID" value="AT3G49430"/>
</dbReference>
<dbReference type="EnsemblPlants" id="AT3G49430.2">
    <molecule id="A2RVS6-2"/>
    <property type="protein sequence ID" value="AT3G49430.2"/>
    <property type="gene ID" value="AT3G49430"/>
</dbReference>
<dbReference type="EnsemblPlants" id="AT3G49430.3">
    <molecule id="A2RVS6-1"/>
    <property type="protein sequence ID" value="AT3G49430.3"/>
    <property type="gene ID" value="AT3G49430"/>
</dbReference>
<dbReference type="EnsemblPlants" id="AT3G49430.4">
    <molecule id="A2RVS6-1"/>
    <property type="protein sequence ID" value="AT3G49430.4"/>
    <property type="gene ID" value="AT3G49430"/>
</dbReference>
<dbReference type="EnsemblPlants" id="AT3G49430.5">
    <molecule id="A2RVS6-1"/>
    <property type="protein sequence ID" value="AT3G49430.5"/>
    <property type="gene ID" value="AT3G49430"/>
</dbReference>
<dbReference type="EnsemblPlants" id="AT3G49430.6">
    <molecule id="A2RVS6-1"/>
    <property type="protein sequence ID" value="AT3G49430.6"/>
    <property type="gene ID" value="AT3G49430"/>
</dbReference>
<dbReference type="EnsemblPlants" id="AT3G49430.7">
    <molecule id="A2RVS6-1"/>
    <property type="protein sequence ID" value="AT3G49430.7"/>
    <property type="gene ID" value="AT3G49430"/>
</dbReference>
<dbReference type="GeneID" id="824105"/>
<dbReference type="Gramene" id="AT3G49430.1">
    <molecule id="A2RVS6-1"/>
    <property type="protein sequence ID" value="AT3G49430.1"/>
    <property type="gene ID" value="AT3G49430"/>
</dbReference>
<dbReference type="Gramene" id="AT3G49430.2">
    <molecule id="A2RVS6-2"/>
    <property type="protein sequence ID" value="AT3G49430.2"/>
    <property type="gene ID" value="AT3G49430"/>
</dbReference>
<dbReference type="Gramene" id="AT3G49430.3">
    <molecule id="A2RVS6-1"/>
    <property type="protein sequence ID" value="AT3G49430.3"/>
    <property type="gene ID" value="AT3G49430"/>
</dbReference>
<dbReference type="Gramene" id="AT3G49430.4">
    <molecule id="A2RVS6-1"/>
    <property type="protein sequence ID" value="AT3G49430.4"/>
    <property type="gene ID" value="AT3G49430"/>
</dbReference>
<dbReference type="Gramene" id="AT3G49430.5">
    <molecule id="A2RVS6-1"/>
    <property type="protein sequence ID" value="AT3G49430.5"/>
    <property type="gene ID" value="AT3G49430"/>
</dbReference>
<dbReference type="Gramene" id="AT3G49430.6">
    <molecule id="A2RVS6-1"/>
    <property type="protein sequence ID" value="AT3G49430.6"/>
    <property type="gene ID" value="AT3G49430"/>
</dbReference>
<dbReference type="Gramene" id="AT3G49430.7">
    <molecule id="A2RVS6-1"/>
    <property type="protein sequence ID" value="AT3G49430.7"/>
    <property type="gene ID" value="AT3G49430"/>
</dbReference>
<dbReference type="KEGG" id="ath:AT3G49430"/>
<dbReference type="Araport" id="AT3G49430"/>
<dbReference type="TAIR" id="AT3G49430">
    <property type="gene designation" value="SR34A"/>
</dbReference>
<dbReference type="eggNOG" id="KOG0105">
    <property type="taxonomic scope" value="Eukaryota"/>
</dbReference>
<dbReference type="InParanoid" id="A2RVS6"/>
<dbReference type="OMA" id="RHPMLRH"/>
<dbReference type="OrthoDB" id="1099063at2759"/>
<dbReference type="PhylomeDB" id="A2RVS6"/>
<dbReference type="CD-CODE" id="4299E36E">
    <property type="entry name" value="Nucleolus"/>
</dbReference>
<dbReference type="PRO" id="PR:A2RVS6"/>
<dbReference type="Proteomes" id="UP000006548">
    <property type="component" value="Chromosome 3"/>
</dbReference>
<dbReference type="ExpressionAtlas" id="A2RVS6">
    <property type="expression patterns" value="baseline and differential"/>
</dbReference>
<dbReference type="GO" id="GO:0016607">
    <property type="term" value="C:nuclear speck"/>
    <property type="evidence" value="ECO:0007669"/>
    <property type="project" value="UniProtKB-SubCell"/>
</dbReference>
<dbReference type="GO" id="GO:0005730">
    <property type="term" value="C:nucleolus"/>
    <property type="evidence" value="ECO:0007005"/>
    <property type="project" value="TAIR"/>
</dbReference>
<dbReference type="GO" id="GO:0005681">
    <property type="term" value="C:spliceosomal complex"/>
    <property type="evidence" value="ECO:0007669"/>
    <property type="project" value="UniProtKB-KW"/>
</dbReference>
<dbReference type="GO" id="GO:0003729">
    <property type="term" value="F:mRNA binding"/>
    <property type="evidence" value="ECO:0000314"/>
    <property type="project" value="TAIR"/>
</dbReference>
<dbReference type="GO" id="GO:0006397">
    <property type="term" value="P:mRNA processing"/>
    <property type="evidence" value="ECO:0007669"/>
    <property type="project" value="UniProtKB-KW"/>
</dbReference>
<dbReference type="GO" id="GO:0008380">
    <property type="term" value="P:RNA splicing"/>
    <property type="evidence" value="ECO:0000303"/>
    <property type="project" value="TAIR"/>
</dbReference>
<dbReference type="CDD" id="cd12602">
    <property type="entry name" value="RRM2_SF2_plant_like"/>
    <property type="match status" value="1"/>
</dbReference>
<dbReference type="FunFam" id="3.30.70.330:FF:000062">
    <property type="entry name" value="serine/arginine-rich splicing factor SR34A-like"/>
    <property type="match status" value="1"/>
</dbReference>
<dbReference type="FunFam" id="3.30.70.330:FF:000244">
    <property type="entry name" value="serine/arginine-rich splicing factor SR34A-like"/>
    <property type="match status" value="1"/>
</dbReference>
<dbReference type="Gene3D" id="3.30.70.330">
    <property type="match status" value="2"/>
</dbReference>
<dbReference type="InterPro" id="IPR012677">
    <property type="entry name" value="Nucleotide-bd_a/b_plait_sf"/>
</dbReference>
<dbReference type="InterPro" id="IPR035979">
    <property type="entry name" value="RBD_domain_sf"/>
</dbReference>
<dbReference type="InterPro" id="IPR000504">
    <property type="entry name" value="RRM_dom"/>
</dbReference>
<dbReference type="InterPro" id="IPR050374">
    <property type="entry name" value="RRT5_SRSF_SR"/>
</dbReference>
<dbReference type="PANTHER" id="PTHR23003">
    <property type="entry name" value="RNA RECOGNITION MOTIF RRM DOMAIN CONTAINING PROTEIN"/>
    <property type="match status" value="1"/>
</dbReference>
<dbReference type="PANTHER" id="PTHR23003:SF62">
    <property type="entry name" value="SERINE_ARGININE (SR)-TYPE SHUTTLING MRNA BINDING PROTEIN NPL3"/>
    <property type="match status" value="1"/>
</dbReference>
<dbReference type="Pfam" id="PF00076">
    <property type="entry name" value="RRM_1"/>
    <property type="match status" value="2"/>
</dbReference>
<dbReference type="SMART" id="SM00360">
    <property type="entry name" value="RRM"/>
    <property type="match status" value="2"/>
</dbReference>
<dbReference type="SUPFAM" id="SSF54928">
    <property type="entry name" value="RNA-binding domain, RBD"/>
    <property type="match status" value="1"/>
</dbReference>
<dbReference type="PROSITE" id="PS50102">
    <property type="entry name" value="RRM"/>
    <property type="match status" value="2"/>
</dbReference>
<accession>A2RVS6</accession>
<accession>A0A1I9LMJ8</accession>
<accession>A8MR30</accession>
<accession>Q9CA06</accession>
<accession>Q9SCL3</accession>
<protein>
    <recommendedName>
        <fullName>Serine/arginine-rich splicing factor SR34A</fullName>
        <shortName>At-SR34A</shortName>
        <shortName>At-SRp34A</shortName>
        <shortName>AtSR34A</shortName>
    </recommendedName>
    <alternativeName>
        <fullName>SER/ARG-rich protein 34A</fullName>
    </alternativeName>
</protein>
<gene>
    <name type="primary">SR34A</name>
    <name type="synonym">SRP34A</name>
    <name type="ordered locus">At3g49430</name>
    <name type="ORF">T1G12.13</name>
    <name type="ORF">T9C5.30</name>
</gene>
<reference key="1">
    <citation type="journal article" date="2000" name="Nature">
        <title>Sequence and analysis of chromosome 3 of the plant Arabidopsis thaliana.</title>
        <authorList>
            <person name="Salanoubat M."/>
            <person name="Lemcke K."/>
            <person name="Rieger M."/>
            <person name="Ansorge W."/>
            <person name="Unseld M."/>
            <person name="Fartmann B."/>
            <person name="Valle G."/>
            <person name="Bloecker H."/>
            <person name="Perez-Alonso M."/>
            <person name="Obermaier B."/>
            <person name="Delseny M."/>
            <person name="Boutry M."/>
            <person name="Grivell L.A."/>
            <person name="Mache R."/>
            <person name="Puigdomenech P."/>
            <person name="De Simone V."/>
            <person name="Choisne N."/>
            <person name="Artiguenave F."/>
            <person name="Robert C."/>
            <person name="Brottier P."/>
            <person name="Wincker P."/>
            <person name="Cattolico L."/>
            <person name="Weissenbach J."/>
            <person name="Saurin W."/>
            <person name="Quetier F."/>
            <person name="Schaefer M."/>
            <person name="Mueller-Auer S."/>
            <person name="Gabel C."/>
            <person name="Fuchs M."/>
            <person name="Benes V."/>
            <person name="Wurmbach E."/>
            <person name="Drzonek H."/>
            <person name="Erfle H."/>
            <person name="Jordan N."/>
            <person name="Bangert S."/>
            <person name="Wiedelmann R."/>
            <person name="Kranz H."/>
            <person name="Voss H."/>
            <person name="Holland R."/>
            <person name="Brandt P."/>
            <person name="Nyakatura G."/>
            <person name="Vezzi A."/>
            <person name="D'Angelo M."/>
            <person name="Pallavicini A."/>
            <person name="Toppo S."/>
            <person name="Simionati B."/>
            <person name="Conrad A."/>
            <person name="Hornischer K."/>
            <person name="Kauer G."/>
            <person name="Loehnert T.-H."/>
            <person name="Nordsiek G."/>
            <person name="Reichelt J."/>
            <person name="Scharfe M."/>
            <person name="Schoen O."/>
            <person name="Bargues M."/>
            <person name="Terol J."/>
            <person name="Climent J."/>
            <person name="Navarro P."/>
            <person name="Collado C."/>
            <person name="Perez-Perez A."/>
            <person name="Ottenwaelder B."/>
            <person name="Duchemin D."/>
            <person name="Cooke R."/>
            <person name="Laudie M."/>
            <person name="Berger-Llauro C."/>
            <person name="Purnelle B."/>
            <person name="Masuy D."/>
            <person name="de Haan M."/>
            <person name="Maarse A.C."/>
            <person name="Alcaraz J.-P."/>
            <person name="Cottet A."/>
            <person name="Casacuberta E."/>
            <person name="Monfort A."/>
            <person name="Argiriou A."/>
            <person name="Flores M."/>
            <person name="Liguori R."/>
            <person name="Vitale D."/>
            <person name="Mannhaupt G."/>
            <person name="Haase D."/>
            <person name="Schoof H."/>
            <person name="Rudd S."/>
            <person name="Zaccaria P."/>
            <person name="Mewes H.-W."/>
            <person name="Mayer K.F.X."/>
            <person name="Kaul S."/>
            <person name="Town C.D."/>
            <person name="Koo H.L."/>
            <person name="Tallon L.J."/>
            <person name="Jenkins J."/>
            <person name="Rooney T."/>
            <person name="Rizzo M."/>
            <person name="Walts A."/>
            <person name="Utterback T."/>
            <person name="Fujii C.Y."/>
            <person name="Shea T.P."/>
            <person name="Creasy T.H."/>
            <person name="Haas B."/>
            <person name="Maiti R."/>
            <person name="Wu D."/>
            <person name="Peterson J."/>
            <person name="Van Aken S."/>
            <person name="Pai G."/>
            <person name="Militscher J."/>
            <person name="Sellers P."/>
            <person name="Gill J.E."/>
            <person name="Feldblyum T.V."/>
            <person name="Preuss D."/>
            <person name="Lin X."/>
            <person name="Nierman W.C."/>
            <person name="Salzberg S.L."/>
            <person name="White O."/>
            <person name="Venter J.C."/>
            <person name="Fraser C.M."/>
            <person name="Kaneko T."/>
            <person name="Nakamura Y."/>
            <person name="Sato S."/>
            <person name="Kato T."/>
            <person name="Asamizu E."/>
            <person name="Sasamoto S."/>
            <person name="Kimura T."/>
            <person name="Idesawa K."/>
            <person name="Kawashima K."/>
            <person name="Kishida Y."/>
            <person name="Kiyokawa C."/>
            <person name="Kohara M."/>
            <person name="Matsumoto M."/>
            <person name="Matsuno A."/>
            <person name="Muraki A."/>
            <person name="Nakayama S."/>
            <person name="Nakazaki N."/>
            <person name="Shinpo S."/>
            <person name="Takeuchi C."/>
            <person name="Wada T."/>
            <person name="Watanabe A."/>
            <person name="Yamada M."/>
            <person name="Yasuda M."/>
            <person name="Tabata S."/>
        </authorList>
    </citation>
    <scope>NUCLEOTIDE SEQUENCE [LARGE SCALE GENOMIC DNA]</scope>
    <source>
        <strain>cv. Columbia</strain>
    </source>
</reference>
<reference key="2">
    <citation type="journal article" date="2017" name="Plant J.">
        <title>Araport11: a complete reannotation of the Arabidopsis thaliana reference genome.</title>
        <authorList>
            <person name="Cheng C.Y."/>
            <person name="Krishnakumar V."/>
            <person name="Chan A.P."/>
            <person name="Thibaud-Nissen F."/>
            <person name="Schobel S."/>
            <person name="Town C.D."/>
        </authorList>
    </citation>
    <scope>GENOME REANNOTATION</scope>
    <source>
        <strain>cv. Columbia</strain>
    </source>
</reference>
<reference key="3">
    <citation type="submission" date="2007-01" db="EMBL/GenBank/DDBJ databases">
        <title>Arabidopsis ORF clones.</title>
        <authorList>
            <person name="Kim C.J."/>
            <person name="Bautista V.R."/>
            <person name="Chen H."/>
            <person name="De Los Reyes C."/>
            <person name="Wu S.Y."/>
            <person name="Ecker J.R."/>
        </authorList>
    </citation>
    <scope>NUCLEOTIDE SEQUENCE [LARGE SCALE MRNA] (ISOFORM 1)</scope>
</reference>
<reference key="4">
    <citation type="journal article" date="2007" name="Plant J.">
        <title>Alternative splicing of pre-mRNAs of Arabidopsis serine/arginine-rich proteins: regulation by hormones and stresses.</title>
        <authorList>
            <person name="Palusa S.G."/>
            <person name="Ali G.S."/>
            <person name="Reddy A.S."/>
        </authorList>
    </citation>
    <scope>ALTERNATIVE SPLICING</scope>
    <scope>INDUCTION</scope>
</reference>
<reference key="5">
    <citation type="journal article" date="2010" name="Plant Cell">
        <title>Implementing a rational and consistent nomenclature for serine/arginine-rich protein splicing factors (SR proteins) in plants.</title>
        <authorList>
            <person name="Barta A."/>
            <person name="Kalyna M."/>
            <person name="Reddy A.S."/>
        </authorList>
    </citation>
    <scope>GENE FAMILY</scope>
    <scope>NOMENCLATURE</scope>
</reference>
<reference key="6">
    <citation type="journal article" date="2011" name="PLoS ONE">
        <title>Comparative analysis of serine/arginine-rich proteins across 27 eukaryotes: insights into sub-family classification and extent of alternative splicing.</title>
        <authorList>
            <person name="Richardson D.N."/>
            <person name="Rogers M.F."/>
            <person name="Labadorf A."/>
            <person name="Ben-Hur A."/>
            <person name="Guo H."/>
            <person name="Paterson A.H."/>
            <person name="Reddy A.S.N."/>
        </authorList>
    </citation>
    <scope>GENE FAMILY</scope>
</reference>
<proteinExistence type="evidence at transcript level"/>
<sequence length="300" mass="33599">MSGRFSRSIYVGNLPGDIREHEIEDIFYKYGRIVDIELKVPPRPPCYCFVEFEHSRDAEDAIKGRDGYNLDGCRLRVELAHGGRGQSSSDRRGGYGGGGSGYGGGGGGGGSARFGVSRHSEFRVIVRGLPSSASWQDLKDHMRKAGDVCFAEVTRDSDGTYGVVDYTNYDDMKYAIRKLDDTEFRNPWARGFIRVKKYESSRSRSRSPSRSRSRSRSRSRSRGRGRSHSRSRSLSRSKSPRKDLSKSPRRSLSRSISKSRSPSPDKKKSPPRAMSRSKSRSRSRSRSPSKSPPKVREGSV</sequence>
<feature type="chain" id="PRO_0000429596" description="Serine/arginine-rich splicing factor SR34A">
    <location>
        <begin position="1"/>
        <end position="300"/>
    </location>
</feature>
<feature type="domain" description="RRM 1" evidence="7">
    <location>
        <begin position="7"/>
        <end position="82"/>
    </location>
</feature>
<feature type="domain" description="RRM 2" evidence="7">
    <location>
        <begin position="122"/>
        <end position="200"/>
    </location>
</feature>
<feature type="region of interest" description="Disordered" evidence="8">
    <location>
        <begin position="81"/>
        <end position="110"/>
    </location>
</feature>
<feature type="region of interest" description="Disordered" evidence="8">
    <location>
        <begin position="198"/>
        <end position="300"/>
    </location>
</feature>
<feature type="compositionally biased region" description="Gly residues" evidence="8">
    <location>
        <begin position="94"/>
        <end position="110"/>
    </location>
</feature>
<feature type="compositionally biased region" description="Basic residues" evidence="8">
    <location>
        <begin position="203"/>
        <end position="239"/>
    </location>
</feature>
<feature type="compositionally biased region" description="Low complexity" evidence="8">
    <location>
        <begin position="253"/>
        <end position="262"/>
    </location>
</feature>
<feature type="compositionally biased region" description="Basic residues" evidence="8">
    <location>
        <begin position="275"/>
        <end position="287"/>
    </location>
</feature>
<feature type="modified residue" description="Phosphoserine" evidence="2">
    <location>
        <position position="207"/>
    </location>
</feature>
<feature type="modified residue" description="Phosphoserine" evidence="2">
    <location>
        <position position="209"/>
    </location>
</feature>
<feature type="modified residue" description="Phosphoserine" evidence="2">
    <location>
        <position position="231"/>
    </location>
</feature>
<feature type="modified residue" description="Phosphoserine" evidence="5">
    <location>
        <position position="233"/>
    </location>
</feature>
<feature type="modified residue" description="Phosphoserine" evidence="4">
    <location>
        <position position="239"/>
    </location>
</feature>
<feature type="modified residue" description="Phosphoserine" evidence="6">
    <location>
        <position position="259"/>
    </location>
</feature>
<feature type="modified residue" description="Phosphoserine" evidence="3">
    <location>
        <position position="275"/>
    </location>
</feature>
<feature type="modified residue" description="Phosphoserine" evidence="5">
    <location>
        <position position="285"/>
    </location>
</feature>
<feature type="splice variant" id="VSP_054990" description="In isoform 2." evidence="9">
    <original>AMSRSKSRSRSRSRSPSKSPPKVREGSV</original>
    <variation>QVFCPSFVFFLSTIMILLFVLLFLL</variation>
    <location>
        <begin position="273"/>
        <end position="300"/>
    </location>
</feature>
<evidence type="ECO:0000250" key="1">
    <source>
        <dbReference type="UniProtKB" id="O22315"/>
    </source>
</evidence>
<evidence type="ECO:0000250" key="2">
    <source>
        <dbReference type="UniProtKB" id="P92964"/>
    </source>
</evidence>
<evidence type="ECO:0000250" key="3">
    <source>
        <dbReference type="UniProtKB" id="P92965"/>
    </source>
</evidence>
<evidence type="ECO:0000250" key="4">
    <source>
        <dbReference type="UniProtKB" id="P92966"/>
    </source>
</evidence>
<evidence type="ECO:0000250" key="5">
    <source>
        <dbReference type="UniProtKB" id="Q9FYB7"/>
    </source>
</evidence>
<evidence type="ECO:0000250" key="6">
    <source>
        <dbReference type="UniProtKB" id="Q9SJA6"/>
    </source>
</evidence>
<evidence type="ECO:0000255" key="7">
    <source>
        <dbReference type="PROSITE-ProRule" id="PRU00176"/>
    </source>
</evidence>
<evidence type="ECO:0000256" key="8">
    <source>
        <dbReference type="SAM" id="MobiDB-lite"/>
    </source>
</evidence>
<evidence type="ECO:0000305" key="9"/>
<evidence type="ECO:0000305" key="10">
    <source>
    </source>
</evidence>
<keyword id="KW-0025">Alternative splicing</keyword>
<keyword id="KW-0507">mRNA processing</keyword>
<keyword id="KW-0508">mRNA splicing</keyword>
<keyword id="KW-0539">Nucleus</keyword>
<keyword id="KW-0597">Phosphoprotein</keyword>
<keyword id="KW-1185">Reference proteome</keyword>
<keyword id="KW-0677">Repeat</keyword>
<keyword id="KW-0694">RNA-binding</keyword>
<keyword id="KW-0747">Spliceosome</keyword>
<comment type="function">
    <text>Probably involved in intron recognition and spliceosome assembly.</text>
</comment>
<comment type="subunit">
    <text>Component of the spliceosome.</text>
</comment>
<comment type="subcellular location">
    <subcellularLocation>
        <location evidence="1">Nucleus speckle</location>
    </subcellularLocation>
    <subcellularLocation>
        <location evidence="1">Nucleus</location>
        <location evidence="1">Nucleoplasm</location>
    </subcellularLocation>
</comment>
<comment type="alternative products">
    <event type="alternative splicing"/>
    <isoform>
        <id>A2RVS6-1</id>
        <name>1</name>
        <sequence type="displayed"/>
    </isoform>
    <isoform>
        <id>A2RVS6-2</id>
        <name>2</name>
        <sequence type="described" ref="VSP_054990"/>
    </isoform>
</comment>
<comment type="miscellaneous">
    <text evidence="10">The splicing pattern of the pre-mRNA is regulated in a tissue-specific manner and by development, and changes in response to various types of abiotic stresses and hormones.</text>
</comment>
<comment type="similarity">
    <text evidence="9">Belongs to the splicing factor SR family. SR subfamily.</text>
</comment>
<comment type="sequence caution" evidence="9">
    <conflict type="erroneous gene model prediction">
        <sequence resource="EMBL-CDS" id="AAG52185"/>
    </conflict>
</comment>
<comment type="sequence caution" evidence="9">
    <conflict type="erroneous gene model prediction">
        <sequence resource="EMBL-CDS" id="CAB62448"/>
    </conflict>
</comment>